<name>G6PI_MESH7</name>
<feature type="chain" id="PRO_0000180681" description="Glucose-6-phosphate isomerase">
    <location>
        <begin position="1"/>
        <end position="429"/>
    </location>
</feature>
<feature type="active site" description="Proton donor" evidence="1">
    <location>
        <position position="282"/>
    </location>
</feature>
<feature type="active site" evidence="1">
    <location>
        <position position="303"/>
    </location>
</feature>
<feature type="active site" evidence="1">
    <location>
        <position position="418"/>
    </location>
</feature>
<reference key="1">
    <citation type="journal article" date="2005" name="J. Bacteriol.">
        <title>Swine and poultry pathogens: the complete genome sequences of two strains of Mycoplasma hyopneumoniae and a strain of Mycoplasma synoviae.</title>
        <authorList>
            <person name="Vasconcelos A.T.R."/>
            <person name="Ferreira H.B."/>
            <person name="Bizarro C.V."/>
            <person name="Bonatto S.L."/>
            <person name="Carvalho M.O."/>
            <person name="Pinto P.M."/>
            <person name="Almeida D.F."/>
            <person name="Almeida L.G.P."/>
            <person name="Almeida R."/>
            <person name="Alves-Junior L."/>
            <person name="Assuncao E.N."/>
            <person name="Azevedo V.A.C."/>
            <person name="Bogo M.R."/>
            <person name="Brigido M.M."/>
            <person name="Brocchi M."/>
            <person name="Burity H.A."/>
            <person name="Camargo A.A."/>
            <person name="Camargo S.S."/>
            <person name="Carepo M.S."/>
            <person name="Carraro D.M."/>
            <person name="de Mattos Cascardo J.C."/>
            <person name="Castro L.A."/>
            <person name="Cavalcanti G."/>
            <person name="Chemale G."/>
            <person name="Collevatti R.G."/>
            <person name="Cunha C.W."/>
            <person name="Dallagiovanna B."/>
            <person name="Dambros B.P."/>
            <person name="Dellagostin O.A."/>
            <person name="Falcao C."/>
            <person name="Fantinatti-Garboggini F."/>
            <person name="Felipe M.S.S."/>
            <person name="Fiorentin L."/>
            <person name="Franco G.R."/>
            <person name="Freitas N.S.A."/>
            <person name="Frias D."/>
            <person name="Grangeiro T.B."/>
            <person name="Grisard E.C."/>
            <person name="Guimaraes C.T."/>
            <person name="Hungria M."/>
            <person name="Jardim S.N."/>
            <person name="Krieger M.A."/>
            <person name="Laurino J.P."/>
            <person name="Lima L.F.A."/>
            <person name="Lopes M.I."/>
            <person name="Loreto E.L.S."/>
            <person name="Madeira H.M.F."/>
            <person name="Manfio G.P."/>
            <person name="Maranhao A.Q."/>
            <person name="Martinkovics C.T."/>
            <person name="Medeiros S.R.B."/>
            <person name="Moreira M.A.M."/>
            <person name="Neiva M."/>
            <person name="Ramalho-Neto C.E."/>
            <person name="Nicolas M.F."/>
            <person name="Oliveira S.C."/>
            <person name="Paixao R.F.C."/>
            <person name="Pedrosa F.O."/>
            <person name="Pena S.D.J."/>
            <person name="Pereira M."/>
            <person name="Pereira-Ferrari L."/>
            <person name="Piffer I."/>
            <person name="Pinto L.S."/>
            <person name="Potrich D.P."/>
            <person name="Salim A.C.M."/>
            <person name="Santos F.R."/>
            <person name="Schmitt R."/>
            <person name="Schneider M.P.C."/>
            <person name="Schrank A."/>
            <person name="Schrank I.S."/>
            <person name="Schuck A.F."/>
            <person name="Seuanez H.N."/>
            <person name="Silva D.W."/>
            <person name="Silva R."/>
            <person name="Silva S.C."/>
            <person name="Soares C.M.A."/>
            <person name="Souza K.R.L."/>
            <person name="Souza R.C."/>
            <person name="Staats C.C."/>
            <person name="Steffens M.B.R."/>
            <person name="Teixeira S.M.R."/>
            <person name="Urmenyi T.P."/>
            <person name="Vainstein M.H."/>
            <person name="Zuccherato L.W."/>
            <person name="Simpson A.J.G."/>
            <person name="Zaha A."/>
        </authorList>
    </citation>
    <scope>NUCLEOTIDE SEQUENCE [LARGE SCALE GENOMIC DNA]</scope>
    <source>
        <strain>7448</strain>
    </source>
</reference>
<protein>
    <recommendedName>
        <fullName evidence="1">Glucose-6-phosphate isomerase</fullName>
        <shortName evidence="1">GPI</shortName>
        <ecNumber evidence="1">5.3.1.9</ecNumber>
    </recommendedName>
    <alternativeName>
        <fullName evidence="1">Phosphoglucose isomerase</fullName>
        <shortName evidence="1">PGI</shortName>
    </alternativeName>
    <alternativeName>
        <fullName evidence="1">Phosphohexose isomerase</fullName>
        <shortName evidence="1">PHI</shortName>
    </alternativeName>
</protein>
<evidence type="ECO:0000255" key="1">
    <source>
        <dbReference type="HAMAP-Rule" id="MF_00473"/>
    </source>
</evidence>
<keyword id="KW-0963">Cytoplasm</keyword>
<keyword id="KW-0312">Gluconeogenesis</keyword>
<keyword id="KW-0324">Glycolysis</keyword>
<keyword id="KW-0413">Isomerase</keyword>
<comment type="function">
    <text evidence="1">Catalyzes the reversible isomerization of glucose-6-phosphate to fructose-6-phosphate.</text>
</comment>
<comment type="catalytic activity">
    <reaction evidence="1">
        <text>alpha-D-glucose 6-phosphate = beta-D-fructose 6-phosphate</text>
        <dbReference type="Rhea" id="RHEA:11816"/>
        <dbReference type="ChEBI" id="CHEBI:57634"/>
        <dbReference type="ChEBI" id="CHEBI:58225"/>
        <dbReference type="EC" id="5.3.1.9"/>
    </reaction>
</comment>
<comment type="pathway">
    <text evidence="1">Carbohydrate biosynthesis; gluconeogenesis.</text>
</comment>
<comment type="pathway">
    <text evidence="1">Carbohydrate degradation; glycolysis; D-glyceraldehyde 3-phosphate and glycerone phosphate from D-glucose: step 2/4.</text>
</comment>
<comment type="subcellular location">
    <subcellularLocation>
        <location evidence="1">Cytoplasm</location>
    </subcellularLocation>
</comment>
<comment type="similarity">
    <text evidence="1">Belongs to the GPI family.</text>
</comment>
<organism>
    <name type="scientific">Mesomycoplasma hyopneumoniae (strain 7448)</name>
    <name type="common">Mycoplasma hyopneumoniae</name>
    <dbReference type="NCBI Taxonomy" id="262722"/>
    <lineage>
        <taxon>Bacteria</taxon>
        <taxon>Bacillati</taxon>
        <taxon>Mycoplasmatota</taxon>
        <taxon>Mycoplasmoidales</taxon>
        <taxon>Metamycoplasmataceae</taxon>
        <taxon>Mesomycoplasma</taxon>
    </lineage>
</organism>
<sequence length="429" mass="48528">MSLKLEVKTEIKLDYQGFQNQINEFHKRINDKNSPDINFLGWNNFPEVAINPQEIARMRKIVENLHQNSINVLVVIGIGGSYLGAKAALDFILGLGPFENKPEVIFLGNSLSSTDLYQKIEYLKTKNFAINVISKSGSTIEPAITFQILYQFLIDQIGEKLAKTRTFVTTSIKSGELLEIAKSNELEIFEVIESIGGRFSVLSSVGFFPLLFAKINVDEIIQGAIEAHKKYSTSSISQNLAYKYALFRFLMYKNFNYKTEILISYEPFLIYFNEWWKQLFGESEGKNLKGLFPASAIFTTDLHSLGQFIQDGSKNFFQTIIYIKKPKFDLGIKKLVQFNSKINKLSGKTVSEINFQAFLATTLAHSSYGNNPNLVLEIADSSPKTFGHLVMFFEKACAMSAYLLGVNPFDQPGVESYKNELAKNLGWDR</sequence>
<gene>
    <name evidence="1" type="primary">pgi</name>
    <name type="ordered locus">MHP7448_0531</name>
</gene>
<accession>Q4A7J2</accession>
<dbReference type="EC" id="5.3.1.9" evidence="1"/>
<dbReference type="EMBL" id="AE017244">
    <property type="protein sequence ID" value="AAZ53897.1"/>
    <property type="molecule type" value="Genomic_DNA"/>
</dbReference>
<dbReference type="RefSeq" id="WP_011290333.1">
    <property type="nucleotide sequence ID" value="NC_007332.1"/>
</dbReference>
<dbReference type="SMR" id="Q4A7J2"/>
<dbReference type="KEGG" id="mhp:MHP7448_0531"/>
<dbReference type="HOGENOM" id="CLU_037303_0_1_14"/>
<dbReference type="UniPathway" id="UPA00109">
    <property type="reaction ID" value="UER00181"/>
</dbReference>
<dbReference type="UniPathway" id="UPA00138"/>
<dbReference type="Proteomes" id="UP000000553">
    <property type="component" value="Chromosome"/>
</dbReference>
<dbReference type="GO" id="GO:0005829">
    <property type="term" value="C:cytosol"/>
    <property type="evidence" value="ECO:0007669"/>
    <property type="project" value="TreeGrafter"/>
</dbReference>
<dbReference type="GO" id="GO:0097367">
    <property type="term" value="F:carbohydrate derivative binding"/>
    <property type="evidence" value="ECO:0007669"/>
    <property type="project" value="InterPro"/>
</dbReference>
<dbReference type="GO" id="GO:0004347">
    <property type="term" value="F:glucose-6-phosphate isomerase activity"/>
    <property type="evidence" value="ECO:0007669"/>
    <property type="project" value="UniProtKB-UniRule"/>
</dbReference>
<dbReference type="GO" id="GO:0048029">
    <property type="term" value="F:monosaccharide binding"/>
    <property type="evidence" value="ECO:0007669"/>
    <property type="project" value="TreeGrafter"/>
</dbReference>
<dbReference type="GO" id="GO:0006094">
    <property type="term" value="P:gluconeogenesis"/>
    <property type="evidence" value="ECO:0007669"/>
    <property type="project" value="UniProtKB-UniRule"/>
</dbReference>
<dbReference type="GO" id="GO:0051156">
    <property type="term" value="P:glucose 6-phosphate metabolic process"/>
    <property type="evidence" value="ECO:0007669"/>
    <property type="project" value="TreeGrafter"/>
</dbReference>
<dbReference type="GO" id="GO:0006096">
    <property type="term" value="P:glycolytic process"/>
    <property type="evidence" value="ECO:0007669"/>
    <property type="project" value="UniProtKB-UniRule"/>
</dbReference>
<dbReference type="CDD" id="cd05015">
    <property type="entry name" value="SIS_PGI_1"/>
    <property type="match status" value="1"/>
</dbReference>
<dbReference type="CDD" id="cd05016">
    <property type="entry name" value="SIS_PGI_2"/>
    <property type="match status" value="1"/>
</dbReference>
<dbReference type="FunFam" id="3.40.50.10490:FF:000016">
    <property type="entry name" value="Glucose-6-phosphate isomerase"/>
    <property type="match status" value="1"/>
</dbReference>
<dbReference type="Gene3D" id="3.40.50.10490">
    <property type="entry name" value="Glucose-6-phosphate isomerase like protein, domain 1"/>
    <property type="match status" value="2"/>
</dbReference>
<dbReference type="HAMAP" id="MF_00473">
    <property type="entry name" value="G6P_isomerase"/>
    <property type="match status" value="1"/>
</dbReference>
<dbReference type="InterPro" id="IPR001672">
    <property type="entry name" value="G6P_Isomerase"/>
</dbReference>
<dbReference type="InterPro" id="IPR018189">
    <property type="entry name" value="Phosphoglucose_isomerase_CS"/>
</dbReference>
<dbReference type="InterPro" id="IPR046348">
    <property type="entry name" value="SIS_dom_sf"/>
</dbReference>
<dbReference type="InterPro" id="IPR035476">
    <property type="entry name" value="SIS_PGI_1"/>
</dbReference>
<dbReference type="InterPro" id="IPR035482">
    <property type="entry name" value="SIS_PGI_2"/>
</dbReference>
<dbReference type="NCBIfam" id="NF010697">
    <property type="entry name" value="PRK14097.1"/>
    <property type="match status" value="1"/>
</dbReference>
<dbReference type="PANTHER" id="PTHR11469">
    <property type="entry name" value="GLUCOSE-6-PHOSPHATE ISOMERASE"/>
    <property type="match status" value="1"/>
</dbReference>
<dbReference type="PANTHER" id="PTHR11469:SF1">
    <property type="entry name" value="GLUCOSE-6-PHOSPHATE ISOMERASE"/>
    <property type="match status" value="1"/>
</dbReference>
<dbReference type="Pfam" id="PF00342">
    <property type="entry name" value="PGI"/>
    <property type="match status" value="1"/>
</dbReference>
<dbReference type="PRINTS" id="PR00662">
    <property type="entry name" value="G6PISOMERASE"/>
</dbReference>
<dbReference type="SUPFAM" id="SSF53697">
    <property type="entry name" value="SIS domain"/>
    <property type="match status" value="1"/>
</dbReference>
<dbReference type="PROSITE" id="PS00765">
    <property type="entry name" value="P_GLUCOSE_ISOMERASE_1"/>
    <property type="match status" value="1"/>
</dbReference>
<dbReference type="PROSITE" id="PS00174">
    <property type="entry name" value="P_GLUCOSE_ISOMERASE_2"/>
    <property type="match status" value="1"/>
</dbReference>
<dbReference type="PROSITE" id="PS51463">
    <property type="entry name" value="P_GLUCOSE_ISOMERASE_3"/>
    <property type="match status" value="1"/>
</dbReference>
<proteinExistence type="inferred from homology"/>